<keyword id="KW-0325">Glycoprotein</keyword>
<keyword id="KW-0472">Membrane</keyword>
<keyword id="KW-1185">Reference proteome</keyword>
<keyword id="KW-0812">Transmembrane</keyword>
<keyword id="KW-1133">Transmembrane helix</keyword>
<reference key="1">
    <citation type="journal article" date="2004" name="Genome Res.">
        <title>The status, quality, and expansion of the NIH full-length cDNA project: the Mammalian Gene Collection (MGC).</title>
        <authorList>
            <consortium name="The MGC Project Team"/>
        </authorList>
    </citation>
    <scope>NUCLEOTIDE SEQUENCE [LARGE SCALE MRNA]</scope>
    <source>
        <tissue>Kidney</tissue>
    </source>
</reference>
<feature type="chain" id="PRO_0000274700" description="Clarin-3">
    <location>
        <begin position="1"/>
        <end position="226"/>
    </location>
</feature>
<feature type="transmembrane region" description="Helical" evidence="1">
    <location>
        <begin position="8"/>
        <end position="28"/>
    </location>
</feature>
<feature type="transmembrane region" description="Helical" evidence="1">
    <location>
        <begin position="92"/>
        <end position="112"/>
    </location>
</feature>
<feature type="transmembrane region" description="Helical" evidence="1">
    <location>
        <begin position="128"/>
        <end position="148"/>
    </location>
</feature>
<feature type="transmembrane region" description="Helical" evidence="1">
    <location>
        <begin position="181"/>
        <end position="201"/>
    </location>
</feature>
<feature type="glycosylation site" description="N-linked (GlcNAc...) asparagine" evidence="1">
    <location>
        <position position="46"/>
    </location>
</feature>
<feature type="glycosylation site" description="N-linked (GlcNAc...) asparagine" evidence="1">
    <location>
        <position position="83"/>
    </location>
</feature>
<dbReference type="EMBL" id="BC078942">
    <property type="protein sequence ID" value="AAH78942.1"/>
    <property type="molecule type" value="mRNA"/>
</dbReference>
<dbReference type="RefSeq" id="NP_001014048.1">
    <property type="nucleotide sequence ID" value="NM_001014026.1"/>
</dbReference>
<dbReference type="FunCoup" id="Q6AYR5">
    <property type="interactions" value="2"/>
</dbReference>
<dbReference type="IntAct" id="Q6AYR5">
    <property type="interactions" value="1"/>
</dbReference>
<dbReference type="STRING" id="10116.ENSRNOP00000070737"/>
<dbReference type="GlyCosmos" id="Q6AYR5">
    <property type="glycosylation" value="2 sites, No reported glycans"/>
</dbReference>
<dbReference type="GlyGen" id="Q6AYR5">
    <property type="glycosylation" value="2 sites"/>
</dbReference>
<dbReference type="PhosphoSitePlus" id="Q6AYR5"/>
<dbReference type="PaxDb" id="10116-ENSRNOP00000035233"/>
<dbReference type="Ensembl" id="ENSRNOT00000031397.6">
    <property type="protein sequence ID" value="ENSRNOP00000035233.3"/>
    <property type="gene ID" value="ENSRNOG00000028288.6"/>
</dbReference>
<dbReference type="GeneID" id="309082"/>
<dbReference type="KEGG" id="rno:309082"/>
<dbReference type="UCSC" id="RGD:1305043">
    <property type="organism name" value="rat"/>
</dbReference>
<dbReference type="AGR" id="RGD:1305043"/>
<dbReference type="CTD" id="119467"/>
<dbReference type="RGD" id="1305043">
    <property type="gene designation" value="Clrn3"/>
</dbReference>
<dbReference type="eggNOG" id="ENOG502S2S8">
    <property type="taxonomic scope" value="Eukaryota"/>
</dbReference>
<dbReference type="GeneTree" id="ENSGT00850000132319"/>
<dbReference type="InParanoid" id="Q6AYR5"/>
<dbReference type="OMA" id="IIIVFYQ"/>
<dbReference type="OrthoDB" id="84230at9989"/>
<dbReference type="PhylomeDB" id="Q6AYR5"/>
<dbReference type="TreeFam" id="TF331875"/>
<dbReference type="PRO" id="PR:Q6AYR5"/>
<dbReference type="Proteomes" id="UP000002494">
    <property type="component" value="Chromosome 1"/>
</dbReference>
<dbReference type="Bgee" id="ENSRNOG00000028288">
    <property type="expression patterns" value="Expressed in jejunum and 9 other cell types or tissues"/>
</dbReference>
<dbReference type="GO" id="GO:0016020">
    <property type="term" value="C:membrane"/>
    <property type="evidence" value="ECO:0007669"/>
    <property type="project" value="UniProtKB-SubCell"/>
</dbReference>
<dbReference type="GO" id="GO:0007605">
    <property type="term" value="P:sensory perception of sound"/>
    <property type="evidence" value="ECO:0007669"/>
    <property type="project" value="UniProtKB-ARBA"/>
</dbReference>
<dbReference type="Gene3D" id="1.20.140.150">
    <property type="match status" value="1"/>
</dbReference>
<dbReference type="InterPro" id="IPR026748">
    <property type="entry name" value="Clarin"/>
</dbReference>
<dbReference type="PANTHER" id="PTHR31548">
    <property type="entry name" value="CLARIN"/>
    <property type="match status" value="1"/>
</dbReference>
<dbReference type="PANTHER" id="PTHR31548:SF3">
    <property type="entry name" value="CLARIN-3"/>
    <property type="match status" value="1"/>
</dbReference>
<organism>
    <name type="scientific">Rattus norvegicus</name>
    <name type="common">Rat</name>
    <dbReference type="NCBI Taxonomy" id="10116"/>
    <lineage>
        <taxon>Eukaryota</taxon>
        <taxon>Metazoa</taxon>
        <taxon>Chordata</taxon>
        <taxon>Craniata</taxon>
        <taxon>Vertebrata</taxon>
        <taxon>Euteleostomi</taxon>
        <taxon>Mammalia</taxon>
        <taxon>Eutheria</taxon>
        <taxon>Euarchontoglires</taxon>
        <taxon>Glires</taxon>
        <taxon>Rodentia</taxon>
        <taxon>Myomorpha</taxon>
        <taxon>Muroidea</taxon>
        <taxon>Muridae</taxon>
        <taxon>Murinae</taxon>
        <taxon>Rattus</taxon>
    </lineage>
</organism>
<name>CLRN3_RAT</name>
<comment type="subcellular location">
    <subcellularLocation>
        <location evidence="2">Membrane</location>
        <topology evidence="2">Multi-pass membrane protein</topology>
    </subcellularLocation>
</comment>
<comment type="similarity">
    <text evidence="2">Belongs to the clarin family.</text>
</comment>
<gene>
    <name type="primary">Clrn3</name>
    <name type="synonym">Tmem12</name>
</gene>
<protein>
    <recommendedName>
        <fullName>Clarin-3</fullName>
    </recommendedName>
    <alternativeName>
        <fullName>Transmembrane protein 12</fullName>
    </alternativeName>
</protein>
<proteinExistence type="evidence at transcript level"/>
<evidence type="ECO:0000255" key="1"/>
<evidence type="ECO:0000305" key="2"/>
<accession>Q6AYR5</accession>
<sequence>MPTTQKTLMFLSGFLTSLGSVVVICSILGTQAWITSKIFFTDTISNGTIAITYGLFRGTSSQDLNEGLQELDKNFEVLGILSNSSQKSLHVVVIILLILSLAASLLSSMFTFYNSISNPYQTFLGPMGVYTWNGLSASFVFLTMVLFVGNVDSNHLSEKLSQTLYPDAINKKTTHTYGYSFWLILLVILLNIVTVVIIIFYQKARYHQKQEQRKPVEYAPRDGILF</sequence>